<gene>
    <name type="primary">xpaF1</name>
</gene>
<reference key="1">
    <citation type="journal article" date="1993" name="Mol. Gen. Genet.">
        <title>Molecular cloning, sequence analysis, and characterization of a new cell wall hydrolase, CwlL, of Bacillus licheniformis.</title>
        <authorList>
            <person name="Oda Y."/>
            <person name="Nakayama R."/>
            <person name="Kuroda A."/>
            <person name="Sekiguchi J."/>
        </authorList>
    </citation>
    <scope>NUCLEOTIDE SEQUENCE [GENOMIC DNA]</scope>
    <source>
        <strain>FD0120</strain>
    </source>
</reference>
<dbReference type="EMBL" id="D13377">
    <property type="protein sequence ID" value="BAA02644.1"/>
    <property type="status" value="ALT_INIT"/>
    <property type="molecule type" value="Genomic_DNA"/>
</dbReference>
<dbReference type="EMBL" id="D13377">
    <property type="protein sequence ID" value="BAA02645.1"/>
    <property type="status" value="ALT_INIT"/>
    <property type="molecule type" value="Genomic_DNA"/>
</dbReference>
<dbReference type="PIR" id="S39914">
    <property type="entry name" value="S39914"/>
</dbReference>
<dbReference type="RefSeq" id="WP_020450984.1">
    <property type="nucleotide sequence ID" value="NZ_JARRWE010000002.1"/>
</dbReference>
<dbReference type="SMR" id="P37135"/>
<dbReference type="Gene3D" id="1.10.287.1490">
    <property type="match status" value="1"/>
</dbReference>
<dbReference type="InterPro" id="IPR019715">
    <property type="entry name" value="Haemolysin_XhlA"/>
</dbReference>
<dbReference type="Pfam" id="PF10779">
    <property type="entry name" value="XhlA"/>
    <property type="match status" value="1"/>
</dbReference>
<protein>
    <recommendedName>
        <fullName>Uncharacterized 11.0 kDa protein in cwlL 5'region</fullName>
    </recommendedName>
</protein>
<comment type="similarity">
    <text evidence="1">To B.licheniformis xpaL1 and to B.subtilis XhlA.</text>
</comment>
<comment type="caution">
    <text evidence="1">It is uncertain whether Met-1 or Met-9 is the initiator.</text>
</comment>
<comment type="sequence caution" evidence="1">
    <conflict type="erroneous initiation">
        <sequence resource="EMBL-CDS" id="BAA02644"/>
    </conflict>
</comment>
<comment type="sequence caution" evidence="1">
    <conflict type="erroneous initiation">
        <sequence resource="EMBL-CDS" id="BAA02645"/>
    </conflict>
</comment>
<sequence length="97" mass="11083">MRTGGLREMSQTNEYEVFQKEIKEIKADQKTLEKRVSTLERTSERHDQQIISINEKLNKIEENTTWIKRSITGAIITAVSTGIIGGAIAVFYNLLQK</sequence>
<name>YAF1_BACLI</name>
<organism>
    <name type="scientific">Bacillus licheniformis</name>
    <dbReference type="NCBI Taxonomy" id="1402"/>
    <lineage>
        <taxon>Bacteria</taxon>
        <taxon>Bacillati</taxon>
        <taxon>Bacillota</taxon>
        <taxon>Bacilli</taxon>
        <taxon>Bacillales</taxon>
        <taxon>Bacillaceae</taxon>
        <taxon>Bacillus</taxon>
    </lineage>
</organism>
<evidence type="ECO:0000305" key="1"/>
<feature type="chain" id="PRO_0000066112" description="Uncharacterized 11.0 kDa protein in cwlL 5'region">
    <location>
        <begin position="1"/>
        <end position="97"/>
    </location>
</feature>
<accession>P37135</accession>
<proteinExistence type="predicted"/>